<protein>
    <recommendedName>
        <fullName evidence="1">ATP-dependent Clp protease ATP-binding subunit ClpX</fullName>
    </recommendedName>
</protein>
<organism>
    <name type="scientific">Salmonella paratyphi A (strain ATCC 9150 / SARB42)</name>
    <dbReference type="NCBI Taxonomy" id="295319"/>
    <lineage>
        <taxon>Bacteria</taxon>
        <taxon>Pseudomonadati</taxon>
        <taxon>Pseudomonadota</taxon>
        <taxon>Gammaproteobacteria</taxon>
        <taxon>Enterobacterales</taxon>
        <taxon>Enterobacteriaceae</taxon>
        <taxon>Salmonella</taxon>
    </lineage>
</organism>
<dbReference type="EMBL" id="CP000026">
    <property type="protein sequence ID" value="AAV78158.1"/>
    <property type="molecule type" value="Genomic_DNA"/>
</dbReference>
<dbReference type="RefSeq" id="WP_000130314.1">
    <property type="nucleotide sequence ID" value="NC_006511.1"/>
</dbReference>
<dbReference type="SMR" id="Q5PFN5"/>
<dbReference type="KEGG" id="spt:SPA2273"/>
<dbReference type="HOGENOM" id="CLU_014218_8_2_6"/>
<dbReference type="Proteomes" id="UP000008185">
    <property type="component" value="Chromosome"/>
</dbReference>
<dbReference type="GO" id="GO:0009376">
    <property type="term" value="C:HslUV protease complex"/>
    <property type="evidence" value="ECO:0007669"/>
    <property type="project" value="TreeGrafter"/>
</dbReference>
<dbReference type="GO" id="GO:0005524">
    <property type="term" value="F:ATP binding"/>
    <property type="evidence" value="ECO:0007669"/>
    <property type="project" value="UniProtKB-UniRule"/>
</dbReference>
<dbReference type="GO" id="GO:0016887">
    <property type="term" value="F:ATP hydrolysis activity"/>
    <property type="evidence" value="ECO:0007669"/>
    <property type="project" value="InterPro"/>
</dbReference>
<dbReference type="GO" id="GO:0140662">
    <property type="term" value="F:ATP-dependent protein folding chaperone"/>
    <property type="evidence" value="ECO:0007669"/>
    <property type="project" value="InterPro"/>
</dbReference>
<dbReference type="GO" id="GO:0046983">
    <property type="term" value="F:protein dimerization activity"/>
    <property type="evidence" value="ECO:0007669"/>
    <property type="project" value="InterPro"/>
</dbReference>
<dbReference type="GO" id="GO:0051082">
    <property type="term" value="F:unfolded protein binding"/>
    <property type="evidence" value="ECO:0007669"/>
    <property type="project" value="UniProtKB-UniRule"/>
</dbReference>
<dbReference type="GO" id="GO:0008270">
    <property type="term" value="F:zinc ion binding"/>
    <property type="evidence" value="ECO:0007669"/>
    <property type="project" value="InterPro"/>
</dbReference>
<dbReference type="GO" id="GO:0051301">
    <property type="term" value="P:cell division"/>
    <property type="evidence" value="ECO:0007669"/>
    <property type="project" value="TreeGrafter"/>
</dbReference>
<dbReference type="GO" id="GO:0051603">
    <property type="term" value="P:proteolysis involved in protein catabolic process"/>
    <property type="evidence" value="ECO:0007669"/>
    <property type="project" value="TreeGrafter"/>
</dbReference>
<dbReference type="CDD" id="cd19497">
    <property type="entry name" value="RecA-like_ClpX"/>
    <property type="match status" value="1"/>
</dbReference>
<dbReference type="FunFam" id="1.10.8.60:FF:000002">
    <property type="entry name" value="ATP-dependent Clp protease ATP-binding subunit ClpX"/>
    <property type="match status" value="1"/>
</dbReference>
<dbReference type="FunFam" id="3.40.50.300:FF:000005">
    <property type="entry name" value="ATP-dependent Clp protease ATP-binding subunit ClpX"/>
    <property type="match status" value="1"/>
</dbReference>
<dbReference type="Gene3D" id="1.10.8.60">
    <property type="match status" value="1"/>
</dbReference>
<dbReference type="Gene3D" id="6.20.220.10">
    <property type="entry name" value="ClpX chaperone, C4-type zinc finger domain"/>
    <property type="match status" value="1"/>
</dbReference>
<dbReference type="Gene3D" id="3.40.50.300">
    <property type="entry name" value="P-loop containing nucleotide triphosphate hydrolases"/>
    <property type="match status" value="1"/>
</dbReference>
<dbReference type="HAMAP" id="MF_00175">
    <property type="entry name" value="ClpX"/>
    <property type="match status" value="1"/>
</dbReference>
<dbReference type="InterPro" id="IPR003593">
    <property type="entry name" value="AAA+_ATPase"/>
</dbReference>
<dbReference type="InterPro" id="IPR050052">
    <property type="entry name" value="ATP-dep_Clp_protease_ClpX"/>
</dbReference>
<dbReference type="InterPro" id="IPR003959">
    <property type="entry name" value="ATPase_AAA_core"/>
</dbReference>
<dbReference type="InterPro" id="IPR019489">
    <property type="entry name" value="Clp_ATPase_C"/>
</dbReference>
<dbReference type="InterPro" id="IPR004487">
    <property type="entry name" value="Clp_protease_ATP-bd_su_ClpX"/>
</dbReference>
<dbReference type="InterPro" id="IPR046425">
    <property type="entry name" value="ClpX_bact"/>
</dbReference>
<dbReference type="InterPro" id="IPR027417">
    <property type="entry name" value="P-loop_NTPase"/>
</dbReference>
<dbReference type="InterPro" id="IPR010603">
    <property type="entry name" value="Znf_CppX_C4"/>
</dbReference>
<dbReference type="InterPro" id="IPR038366">
    <property type="entry name" value="Znf_CppX_C4_sf"/>
</dbReference>
<dbReference type="NCBIfam" id="TIGR00382">
    <property type="entry name" value="clpX"/>
    <property type="match status" value="1"/>
</dbReference>
<dbReference type="NCBIfam" id="NF003745">
    <property type="entry name" value="PRK05342.1"/>
    <property type="match status" value="1"/>
</dbReference>
<dbReference type="PANTHER" id="PTHR48102:SF7">
    <property type="entry name" value="ATP-DEPENDENT CLP PROTEASE ATP-BINDING SUBUNIT CLPX-LIKE, MITOCHONDRIAL"/>
    <property type="match status" value="1"/>
</dbReference>
<dbReference type="PANTHER" id="PTHR48102">
    <property type="entry name" value="ATP-DEPENDENT CLP PROTEASE ATP-BINDING SUBUNIT CLPX-LIKE, MITOCHONDRIAL-RELATED"/>
    <property type="match status" value="1"/>
</dbReference>
<dbReference type="Pfam" id="PF07724">
    <property type="entry name" value="AAA_2"/>
    <property type="match status" value="1"/>
</dbReference>
<dbReference type="Pfam" id="PF10431">
    <property type="entry name" value="ClpB_D2-small"/>
    <property type="match status" value="1"/>
</dbReference>
<dbReference type="Pfam" id="PF06689">
    <property type="entry name" value="zf-C4_ClpX"/>
    <property type="match status" value="1"/>
</dbReference>
<dbReference type="SMART" id="SM00382">
    <property type="entry name" value="AAA"/>
    <property type="match status" value="1"/>
</dbReference>
<dbReference type="SMART" id="SM01086">
    <property type="entry name" value="ClpB_D2-small"/>
    <property type="match status" value="1"/>
</dbReference>
<dbReference type="SMART" id="SM00994">
    <property type="entry name" value="zf-C4_ClpX"/>
    <property type="match status" value="1"/>
</dbReference>
<dbReference type="SUPFAM" id="SSF57716">
    <property type="entry name" value="Glucocorticoid receptor-like (DNA-binding domain)"/>
    <property type="match status" value="1"/>
</dbReference>
<dbReference type="SUPFAM" id="SSF52540">
    <property type="entry name" value="P-loop containing nucleoside triphosphate hydrolases"/>
    <property type="match status" value="1"/>
</dbReference>
<dbReference type="PROSITE" id="PS51902">
    <property type="entry name" value="CLPX_ZB"/>
    <property type="match status" value="1"/>
</dbReference>
<sequence>MTDKRKDGSGKLLYCSFCGKSQHEVRKLIAGPSVYICDECVDLCNDIIREEIKEVAPHRERSALPTPHEIRTHLDDYVIGQEQAKKVLAVAVYNHYKRLRNGDTSNGVELGKSNILLIGPTGSGKTLLAETLARLLDVPFTMADATTLTEAGYVGEDVENIIQKLLQKCDYDVQKAQRGIVYIDEIDKISRKSDNPSITRDVSGEGVQQALLKLIEGTVAAVPPQGGRKHPQQEFLQVDTSKILFICGGAFAGLDKVIANRVETGSGIGFGATVKAKSDKASEGELLSQVEPEDLIKFGLIPEFIGRLPVVATLNELSEEALIQILKEPKNALTKQYQALFNLEGVDLEFRDEALDAIARKAMARKTGARGLRSIVEAALLDTMYDLPSMEDVEKVVIDESVIAGQSKPLLIYGKPEAQASGE</sequence>
<comment type="function">
    <text evidence="1">ATP-dependent specificity component of the Clp protease. It directs the protease to specific substrates. Can perform chaperone functions in the absence of ClpP.</text>
</comment>
<comment type="subunit">
    <text evidence="1">Component of the ClpX-ClpP complex. Forms a hexameric ring that, in the presence of ATP, binds to fourteen ClpP subunits assembled into a disk-like structure with a central cavity, resembling the structure of eukaryotic proteasomes.</text>
</comment>
<comment type="similarity">
    <text evidence="1">Belongs to the ClpX chaperone family.</text>
</comment>
<evidence type="ECO:0000255" key="1">
    <source>
        <dbReference type="HAMAP-Rule" id="MF_00175"/>
    </source>
</evidence>
<evidence type="ECO:0000255" key="2">
    <source>
        <dbReference type="PROSITE-ProRule" id="PRU01250"/>
    </source>
</evidence>
<name>CLPX_SALPA</name>
<proteinExistence type="inferred from homology"/>
<keyword id="KW-0067">ATP-binding</keyword>
<keyword id="KW-0143">Chaperone</keyword>
<keyword id="KW-0479">Metal-binding</keyword>
<keyword id="KW-0547">Nucleotide-binding</keyword>
<keyword id="KW-0862">Zinc</keyword>
<reference key="1">
    <citation type="journal article" date="2004" name="Nat. Genet.">
        <title>Comparison of genome degradation in Paratyphi A and Typhi, human-restricted serovars of Salmonella enterica that cause typhoid.</title>
        <authorList>
            <person name="McClelland M."/>
            <person name="Sanderson K.E."/>
            <person name="Clifton S.W."/>
            <person name="Latreille P."/>
            <person name="Porwollik S."/>
            <person name="Sabo A."/>
            <person name="Meyer R."/>
            <person name="Bieri T."/>
            <person name="Ozersky P."/>
            <person name="McLellan M."/>
            <person name="Harkins C.R."/>
            <person name="Wang C."/>
            <person name="Nguyen C."/>
            <person name="Berghoff A."/>
            <person name="Elliott G."/>
            <person name="Kohlberg S."/>
            <person name="Strong C."/>
            <person name="Du F."/>
            <person name="Carter J."/>
            <person name="Kremizki C."/>
            <person name="Layman D."/>
            <person name="Leonard S."/>
            <person name="Sun H."/>
            <person name="Fulton L."/>
            <person name="Nash W."/>
            <person name="Miner T."/>
            <person name="Minx P."/>
            <person name="Delehaunty K."/>
            <person name="Fronick C."/>
            <person name="Magrini V."/>
            <person name="Nhan M."/>
            <person name="Warren W."/>
            <person name="Florea L."/>
            <person name="Spieth J."/>
            <person name="Wilson R.K."/>
        </authorList>
    </citation>
    <scope>NUCLEOTIDE SEQUENCE [LARGE SCALE GENOMIC DNA]</scope>
    <source>
        <strain>ATCC 9150 / SARB42</strain>
    </source>
</reference>
<gene>
    <name evidence="1" type="primary">clpX</name>
    <name type="ordered locus">SPA2273</name>
</gene>
<accession>Q5PFN5</accession>
<feature type="chain" id="PRO_1000024648" description="ATP-dependent Clp protease ATP-binding subunit ClpX">
    <location>
        <begin position="1"/>
        <end position="423"/>
    </location>
</feature>
<feature type="domain" description="ClpX-type ZB" evidence="2">
    <location>
        <begin position="2"/>
        <end position="56"/>
    </location>
</feature>
<feature type="binding site" evidence="2">
    <location>
        <position position="15"/>
    </location>
    <ligand>
        <name>Zn(2+)</name>
        <dbReference type="ChEBI" id="CHEBI:29105"/>
    </ligand>
</feature>
<feature type="binding site" evidence="2">
    <location>
        <position position="18"/>
    </location>
    <ligand>
        <name>Zn(2+)</name>
        <dbReference type="ChEBI" id="CHEBI:29105"/>
    </ligand>
</feature>
<feature type="binding site" evidence="2">
    <location>
        <position position="37"/>
    </location>
    <ligand>
        <name>Zn(2+)</name>
        <dbReference type="ChEBI" id="CHEBI:29105"/>
    </ligand>
</feature>
<feature type="binding site" evidence="2">
    <location>
        <position position="40"/>
    </location>
    <ligand>
        <name>Zn(2+)</name>
        <dbReference type="ChEBI" id="CHEBI:29105"/>
    </ligand>
</feature>
<feature type="binding site" evidence="1">
    <location>
        <begin position="120"/>
        <end position="127"/>
    </location>
    <ligand>
        <name>ATP</name>
        <dbReference type="ChEBI" id="CHEBI:30616"/>
    </ligand>
</feature>